<reference key="1">
    <citation type="journal article" date="2008" name="BMC Genomics">
        <title>The genome of Aeromonas salmonicida subsp. salmonicida A449: insights into the evolution of a fish pathogen.</title>
        <authorList>
            <person name="Reith M.E."/>
            <person name="Singh R.K."/>
            <person name="Curtis B."/>
            <person name="Boyd J.M."/>
            <person name="Bouevitch A."/>
            <person name="Kimball J."/>
            <person name="Munholland J."/>
            <person name="Murphy C."/>
            <person name="Sarty D."/>
            <person name="Williams J."/>
            <person name="Nash J.H."/>
            <person name="Johnson S.C."/>
            <person name="Brown L.L."/>
        </authorList>
    </citation>
    <scope>NUCLEOTIDE SEQUENCE [LARGE SCALE GENOMIC DNA]</scope>
    <source>
        <strain>A449</strain>
    </source>
</reference>
<organism>
    <name type="scientific">Aeromonas salmonicida (strain A449)</name>
    <dbReference type="NCBI Taxonomy" id="382245"/>
    <lineage>
        <taxon>Bacteria</taxon>
        <taxon>Pseudomonadati</taxon>
        <taxon>Pseudomonadota</taxon>
        <taxon>Gammaproteobacteria</taxon>
        <taxon>Aeromonadales</taxon>
        <taxon>Aeromonadaceae</taxon>
        <taxon>Aeromonas</taxon>
    </lineage>
</organism>
<sequence length="442" mass="49346">MREREPSLVYAFRQSTPYVNVHRGATFVLMMGGEAICHPNFANIVSDIALLQTLGIRLVLVFGSRPQNDEALARAGIEAQYHRRIRVTDDESFAIIKQVCGGLQYDITAQLSMGLANTPMQEARISVVSGNFVTAQPLGVDDGIDFCHSGRVRRIDVEGITRQLDQKGLVLISPIGCSVTGESFNLSSEEVARRVAVDLKADKLICFSSTQGVMDRHGEAISELFPEQAEELLVELEQAGEEMSGTARYLRAAIASCRGGVPRSHLVSYQDDGAMLQELFSRDGLGTQIVRESAEQARAATIEDIGGILDLIRPLEEDGILVRRSREQLEMEIDKFTIIERDGLIIGCAALYCFMEEAMAEMACVAIHPEYRNSNRGDQLVAKVAERAKRLGIRRLFVLTTRSIHWFRERGFDPLEVEDLPVERQRLYNWQRRSKVLSKTIS</sequence>
<protein>
    <recommendedName>
        <fullName evidence="1">Amino-acid acetyltransferase</fullName>
        <ecNumber evidence="1">2.3.1.1</ecNumber>
    </recommendedName>
    <alternativeName>
        <fullName evidence="1">N-acetylglutamate synthase</fullName>
        <shortName evidence="1">AGS</shortName>
        <shortName evidence="1">NAGS</shortName>
    </alternativeName>
</protein>
<comment type="catalytic activity">
    <reaction evidence="1">
        <text>L-glutamate + acetyl-CoA = N-acetyl-L-glutamate + CoA + H(+)</text>
        <dbReference type="Rhea" id="RHEA:24292"/>
        <dbReference type="ChEBI" id="CHEBI:15378"/>
        <dbReference type="ChEBI" id="CHEBI:29985"/>
        <dbReference type="ChEBI" id="CHEBI:44337"/>
        <dbReference type="ChEBI" id="CHEBI:57287"/>
        <dbReference type="ChEBI" id="CHEBI:57288"/>
        <dbReference type="EC" id="2.3.1.1"/>
    </reaction>
</comment>
<comment type="pathway">
    <text evidence="1">Amino-acid biosynthesis; L-arginine biosynthesis; N(2)-acetyl-L-ornithine from L-glutamate: step 1/4.</text>
</comment>
<comment type="subcellular location">
    <subcellularLocation>
        <location evidence="1">Cytoplasm</location>
    </subcellularLocation>
</comment>
<comment type="miscellaneous">
    <text>In bacteria which possess the bifunctional enzyme ornithine acetyltransferase/N-acetylglutamate synthase (ArgJ), ArgA fulfills an anaplerotic role.</text>
</comment>
<comment type="similarity">
    <text evidence="1">Belongs to the acetyltransferase family. ArgA subfamily.</text>
</comment>
<dbReference type="EC" id="2.3.1.1" evidence="1"/>
<dbReference type="EMBL" id="CP000644">
    <property type="protein sequence ID" value="ABO90603.1"/>
    <property type="molecule type" value="Genomic_DNA"/>
</dbReference>
<dbReference type="RefSeq" id="WP_005310464.1">
    <property type="nucleotide sequence ID" value="NC_009348.1"/>
</dbReference>
<dbReference type="SMR" id="A4SNY1"/>
<dbReference type="STRING" id="29491.GCA_000820065_00303"/>
<dbReference type="KEGG" id="asa:ASA_2577"/>
<dbReference type="PATRIC" id="fig|382245.13.peg.2542"/>
<dbReference type="eggNOG" id="COG0548">
    <property type="taxonomic scope" value="Bacteria"/>
</dbReference>
<dbReference type="eggNOG" id="COG1246">
    <property type="taxonomic scope" value="Bacteria"/>
</dbReference>
<dbReference type="HOGENOM" id="CLU_024773_0_0_6"/>
<dbReference type="UniPathway" id="UPA00068">
    <property type="reaction ID" value="UER00106"/>
</dbReference>
<dbReference type="Proteomes" id="UP000000225">
    <property type="component" value="Chromosome"/>
</dbReference>
<dbReference type="GO" id="GO:0005737">
    <property type="term" value="C:cytoplasm"/>
    <property type="evidence" value="ECO:0007669"/>
    <property type="project" value="UniProtKB-SubCell"/>
</dbReference>
<dbReference type="GO" id="GO:0004042">
    <property type="term" value="F:L-glutamate N-acetyltransferase activity"/>
    <property type="evidence" value="ECO:0007669"/>
    <property type="project" value="UniProtKB-UniRule"/>
</dbReference>
<dbReference type="GO" id="GO:0006526">
    <property type="term" value="P:L-arginine biosynthetic process"/>
    <property type="evidence" value="ECO:0007669"/>
    <property type="project" value="UniProtKB-UniRule"/>
</dbReference>
<dbReference type="CDD" id="cd04237">
    <property type="entry name" value="AAK_NAGS-ABP"/>
    <property type="match status" value="1"/>
</dbReference>
<dbReference type="CDD" id="cd04301">
    <property type="entry name" value="NAT_SF"/>
    <property type="match status" value="1"/>
</dbReference>
<dbReference type="Gene3D" id="3.40.630.30">
    <property type="match status" value="1"/>
</dbReference>
<dbReference type="Gene3D" id="3.40.1160.10">
    <property type="entry name" value="Acetylglutamate kinase-like"/>
    <property type="match status" value="1"/>
</dbReference>
<dbReference type="HAMAP" id="MF_01105">
    <property type="entry name" value="N_acetyl_glu_synth"/>
    <property type="match status" value="1"/>
</dbReference>
<dbReference type="InterPro" id="IPR036393">
    <property type="entry name" value="AceGlu_kinase-like_sf"/>
</dbReference>
<dbReference type="InterPro" id="IPR016181">
    <property type="entry name" value="Acyl_CoA_acyltransferase"/>
</dbReference>
<dbReference type="InterPro" id="IPR001048">
    <property type="entry name" value="Asp/Glu/Uridylate_kinase"/>
</dbReference>
<dbReference type="InterPro" id="IPR000182">
    <property type="entry name" value="GNAT_dom"/>
</dbReference>
<dbReference type="InterPro" id="IPR033719">
    <property type="entry name" value="NAGS_kin"/>
</dbReference>
<dbReference type="InterPro" id="IPR010167">
    <property type="entry name" value="NH2A_AcTrfase"/>
</dbReference>
<dbReference type="NCBIfam" id="TIGR01890">
    <property type="entry name" value="N-Ac-Glu-synth"/>
    <property type="match status" value="1"/>
</dbReference>
<dbReference type="NCBIfam" id="NF003641">
    <property type="entry name" value="PRK05279.1"/>
    <property type="match status" value="1"/>
</dbReference>
<dbReference type="PANTHER" id="PTHR30602">
    <property type="entry name" value="AMINO-ACID ACETYLTRANSFERASE"/>
    <property type="match status" value="1"/>
</dbReference>
<dbReference type="PANTHER" id="PTHR30602:SF12">
    <property type="entry name" value="AMINO-ACID ACETYLTRANSFERASE NAGS1, CHLOROPLASTIC-RELATED"/>
    <property type="match status" value="1"/>
</dbReference>
<dbReference type="Pfam" id="PF00696">
    <property type="entry name" value="AA_kinase"/>
    <property type="match status" value="1"/>
</dbReference>
<dbReference type="Pfam" id="PF00583">
    <property type="entry name" value="Acetyltransf_1"/>
    <property type="match status" value="1"/>
</dbReference>
<dbReference type="PIRSF" id="PIRSF000423">
    <property type="entry name" value="ArgA"/>
    <property type="match status" value="1"/>
</dbReference>
<dbReference type="SUPFAM" id="SSF55729">
    <property type="entry name" value="Acyl-CoA N-acyltransferases (Nat)"/>
    <property type="match status" value="1"/>
</dbReference>
<dbReference type="SUPFAM" id="SSF53633">
    <property type="entry name" value="Carbamate kinase-like"/>
    <property type="match status" value="1"/>
</dbReference>
<dbReference type="PROSITE" id="PS51186">
    <property type="entry name" value="GNAT"/>
    <property type="match status" value="1"/>
</dbReference>
<keyword id="KW-0012">Acyltransferase</keyword>
<keyword id="KW-0028">Amino-acid biosynthesis</keyword>
<keyword id="KW-0055">Arginine biosynthesis</keyword>
<keyword id="KW-0963">Cytoplasm</keyword>
<keyword id="KW-0808">Transferase</keyword>
<accession>A4SNY1</accession>
<gene>
    <name evidence="1" type="primary">argA</name>
    <name type="ordered locus">ASA_2577</name>
</gene>
<evidence type="ECO:0000255" key="1">
    <source>
        <dbReference type="HAMAP-Rule" id="MF_01105"/>
    </source>
</evidence>
<feature type="chain" id="PRO_1000084810" description="Amino-acid acetyltransferase">
    <location>
        <begin position="1"/>
        <end position="442"/>
    </location>
</feature>
<feature type="domain" description="N-acetyltransferase" evidence="1">
    <location>
        <begin position="295"/>
        <end position="442"/>
    </location>
</feature>
<name>ARGA_AERS4</name>
<proteinExistence type="inferred from homology"/>